<comment type="function">
    <text evidence="1">Plays a central role in chromosome condensation, segregation and cell cycle progression. Functions as a homodimer, which is essential for chromosome partition. Involved in negative DNA supercoiling in vivo, and by this means organize and compact chromosomes. May achieve or facilitate chromosome segregation by condensation DNA from both sides of a centrally located replisome during cell division.</text>
</comment>
<comment type="subunit">
    <text evidence="1">Homodimerization via its hinge domain. Binds to DNA via its C-terminal region. Interacts, and probably forms a ternary complex, with MukE and MukF via its C-terminal region. The complex formation is stimulated by calcium or magnesium. Interacts with tubulin-related protein FtsZ.</text>
</comment>
<comment type="subcellular location">
    <subcellularLocation>
        <location evidence="1">Cytoplasm</location>
        <location evidence="1">Nucleoid</location>
    </subcellularLocation>
    <text evidence="1">Restricted to the nucleoid region.</text>
</comment>
<comment type="domain">
    <text evidence="1">The hinge domain, which separates the large intramolecular coiled coil regions, allows the homodimerization, forming a V-shaped homodimer.</text>
</comment>
<comment type="similarity">
    <text evidence="1">Belongs to the SMC family. MukB subfamily.</text>
</comment>
<sequence>MIERGKFRSLTLINWNGFFARTFDLDELVTTLSGGNGAGKSTTMAAFVTALIPDLTLLHFRNTTEAGATSGSRDKGLHGKLKAGVCYSMLDTINSRHQRVVVGVRLQQVAGRDRKVDIKPFAIQGLPMSVQPTQLVTETLSERQARVLPLNELKDKLEAMEGVQFKQFNSITDYHSLMFDLGIIARRLRSASDRSKFYRLIEASLYGGISSAITRSLRDYLLPENSGVRKAFQDMEAALRENRMTLEAIRVTQSDRDLFKHLISEATNYVAADYMRHANERRVHLDKALEFRRELHTSRQQLAAEQYKHVDMARELAEHNGAEGDLEADYQAASDHLNLVQTALRQQEKIERYEADLDELQIRLEEQNEVVAEAIERQEENEARAEAAELEVDELKSQLADYQQALDVQQTRAIQYNQAIAALNRAKELCHLPDLTADSAAEWLETFQAKELEATEKMLSLEQKMSMAQTAHSQFEQAYQLVVAINGPLARNEAWDVARELLREGVDQRHLAEQVQPLRMRLSELEQRLREQQEAERLLADFCKRQGKNFDIDELEALHQELEARIASLSDSVSNAREERMTLRQEQEQLQSRIQSLMRRAPVWLAAQNSLNQLSEQCGEEFSSSQDVTEYLQQLLEREREAIVERDEVGARKNAVDEEIERLSQPGGSEDQRLNALAERFGGVLLSEIYDDVSLEDAPYFSALYGPSRHAIVVPDLSQVTEHLEGLTDCPEDLYLIEGDPQSFDDSVFSVDELEKAVVVKIADRQWRYSRFPEVPLFGRAARESRIESLHAEREVLSERFATLSFDVQKTQRLHQAFSRFIGSHLAVAFESDPEAEIRQLNSRRVELERALSNHENDNQQQRIQFEQAKEGVTALNRILPRLNLLADDSLADRVDEIRERLDEAQEAARFVQQFGNQLAKLEPIVSVLQSDPEQFEQLKEDYAYSQQMQRDARQQAFALTEVVQRRAHFSYSDSAEMLSGNSDLNEKLRERLEQAEAERTRAREALRGHAAQLSQYNQVLASLKSSYDTKKELLNDLQRELQDIGVRADSGAEERARIRRDELHAQLSNNRSRRNQLEKALTFCEAEMDNLTRKLRKLERDYFEMREQVVTAKAGWCAVMRMVKDNGVERRLHRRELAYLSADDLRSMSDKALGALRLAVADNEHLRDVLRMSEDPKRPERKIQFFVAVYQHLRERIRQDIIRTDDPVEAIEQMEIELSRLTEELTSREQKLAISSRSVANIIRKTIQREQNRIRMLNQGLQNVSFGQVNSVRLNVNVRETHAMLLDVLSEQHEQHQDLFNSNRLTFSEALAKLYQRLNPQIDMGQRTPQTIGEELLDYRNYLEMEVEVNRGSDGWLRAESGALSTGEAIGTGMSILVMVVQSWEDESRRLRGKDISPCRLLFLDEAARLDARSIATLFELCERLQMQLIIAAPENISPEKGTTYKLVRKVFQNTEHVHVVGLRGFAPQLPETLPGSDEAPSQAS</sequence>
<reference key="1">
    <citation type="journal article" date="2008" name="J. Bacteriol.">
        <title>Insights into the environmental resistance gene pool from the genome sequence of the multidrug-resistant environmental isolate Escherichia coli SMS-3-5.</title>
        <authorList>
            <person name="Fricke W.F."/>
            <person name="Wright M.S."/>
            <person name="Lindell A.H."/>
            <person name="Harkins D.M."/>
            <person name="Baker-Austin C."/>
            <person name="Ravel J."/>
            <person name="Stepanauskas R."/>
        </authorList>
    </citation>
    <scope>NUCLEOTIDE SEQUENCE [LARGE SCALE GENOMIC DNA]</scope>
    <source>
        <strain>SMS-3-5 / SECEC</strain>
    </source>
</reference>
<evidence type="ECO:0000255" key="1">
    <source>
        <dbReference type="HAMAP-Rule" id="MF_01800"/>
    </source>
</evidence>
<accession>B1LJT9</accession>
<keyword id="KW-0067">ATP-binding</keyword>
<keyword id="KW-0131">Cell cycle</keyword>
<keyword id="KW-0132">Cell division</keyword>
<keyword id="KW-0159">Chromosome partition</keyword>
<keyword id="KW-0175">Coiled coil</keyword>
<keyword id="KW-0963">Cytoplasm</keyword>
<keyword id="KW-0226">DNA condensation</keyword>
<keyword id="KW-0238">DNA-binding</keyword>
<keyword id="KW-0547">Nucleotide-binding</keyword>
<protein>
    <recommendedName>
        <fullName evidence="1">Chromosome partition protein MukB</fullName>
    </recommendedName>
    <alternativeName>
        <fullName evidence="1">Structural maintenance of chromosome-related protein</fullName>
    </alternativeName>
</protein>
<gene>
    <name evidence="1" type="primary">mukB</name>
    <name type="ordered locus">EcSMS35_2196</name>
</gene>
<name>MUKB_ECOSM</name>
<dbReference type="EMBL" id="CP000970">
    <property type="protein sequence ID" value="ACB15608.1"/>
    <property type="molecule type" value="Genomic_DNA"/>
</dbReference>
<dbReference type="RefSeq" id="WP_000572762.1">
    <property type="nucleotide sequence ID" value="NC_010498.1"/>
</dbReference>
<dbReference type="SMR" id="B1LJT9"/>
<dbReference type="KEGG" id="ecm:EcSMS35_2196"/>
<dbReference type="HOGENOM" id="CLU_004430_0_0_6"/>
<dbReference type="Proteomes" id="UP000007011">
    <property type="component" value="Chromosome"/>
</dbReference>
<dbReference type="GO" id="GO:0005737">
    <property type="term" value="C:cytoplasm"/>
    <property type="evidence" value="ECO:0007669"/>
    <property type="project" value="UniProtKB-UniRule"/>
</dbReference>
<dbReference type="GO" id="GO:0009295">
    <property type="term" value="C:nucleoid"/>
    <property type="evidence" value="ECO:0007669"/>
    <property type="project" value="UniProtKB-SubCell"/>
</dbReference>
<dbReference type="GO" id="GO:0005524">
    <property type="term" value="F:ATP binding"/>
    <property type="evidence" value="ECO:0007669"/>
    <property type="project" value="UniProtKB-UniRule"/>
</dbReference>
<dbReference type="GO" id="GO:0003677">
    <property type="term" value="F:DNA binding"/>
    <property type="evidence" value="ECO:0007669"/>
    <property type="project" value="UniProtKB-UniRule"/>
</dbReference>
<dbReference type="GO" id="GO:0051301">
    <property type="term" value="P:cell division"/>
    <property type="evidence" value="ECO:0007669"/>
    <property type="project" value="UniProtKB-KW"/>
</dbReference>
<dbReference type="GO" id="GO:0030261">
    <property type="term" value="P:chromosome condensation"/>
    <property type="evidence" value="ECO:0007669"/>
    <property type="project" value="UniProtKB-KW"/>
</dbReference>
<dbReference type="GO" id="GO:0007059">
    <property type="term" value="P:chromosome segregation"/>
    <property type="evidence" value="ECO:0007669"/>
    <property type="project" value="UniProtKB-UniRule"/>
</dbReference>
<dbReference type="GO" id="GO:0006260">
    <property type="term" value="P:DNA replication"/>
    <property type="evidence" value="ECO:0007669"/>
    <property type="project" value="UniProtKB-UniRule"/>
</dbReference>
<dbReference type="FunFam" id="3.30.70.3500:FF:000001">
    <property type="entry name" value="Chromosome partition protein MukB"/>
    <property type="match status" value="1"/>
</dbReference>
<dbReference type="FunFam" id="3.40.1140.10:FF:000001">
    <property type="entry name" value="Chromosome partition protein MukB"/>
    <property type="match status" value="1"/>
</dbReference>
<dbReference type="FunFam" id="3.40.1140.10:FF:000002">
    <property type="entry name" value="Chromosome partition protein MukB"/>
    <property type="match status" value="1"/>
</dbReference>
<dbReference type="Gene3D" id="1.20.58.850">
    <property type="match status" value="1"/>
</dbReference>
<dbReference type="Gene3D" id="3.40.1140.10">
    <property type="match status" value="2"/>
</dbReference>
<dbReference type="Gene3D" id="1.20.5.420">
    <property type="entry name" value="Immunoglobulin FC, subunit C"/>
    <property type="match status" value="1"/>
</dbReference>
<dbReference type="Gene3D" id="3.30.70.3500">
    <property type="entry name" value="MukB, hinge domain"/>
    <property type="match status" value="1"/>
</dbReference>
<dbReference type="HAMAP" id="MF_01800">
    <property type="entry name" value="MukB"/>
    <property type="match status" value="1"/>
</dbReference>
<dbReference type="InterPro" id="IPR012090">
    <property type="entry name" value="MukB"/>
</dbReference>
<dbReference type="InterPro" id="IPR050308">
    <property type="entry name" value="MukB/SMC"/>
</dbReference>
<dbReference type="InterPro" id="IPR032520">
    <property type="entry name" value="MukB_hinge"/>
</dbReference>
<dbReference type="InterPro" id="IPR042501">
    <property type="entry name" value="MukB_hinge_sf"/>
</dbReference>
<dbReference type="InterPro" id="IPR007406">
    <property type="entry name" value="MukB_N_dom"/>
</dbReference>
<dbReference type="InterPro" id="IPR027417">
    <property type="entry name" value="P-loop_NTPase"/>
</dbReference>
<dbReference type="NCBIfam" id="NF003422">
    <property type="entry name" value="PRK04863.1"/>
    <property type="match status" value="1"/>
</dbReference>
<dbReference type="PANTHER" id="PTHR42963">
    <property type="entry name" value="CHROMOSOME PARTITION PROTEIN MUKB"/>
    <property type="match status" value="1"/>
</dbReference>
<dbReference type="PANTHER" id="PTHR42963:SF1">
    <property type="entry name" value="DUF4476 DOMAIN-CONTAINING PROTEIN"/>
    <property type="match status" value="1"/>
</dbReference>
<dbReference type="Pfam" id="PF04310">
    <property type="entry name" value="MukB"/>
    <property type="match status" value="1"/>
</dbReference>
<dbReference type="Pfam" id="PF16330">
    <property type="entry name" value="MukB_hinge"/>
    <property type="match status" value="1"/>
</dbReference>
<dbReference type="Pfam" id="PF13558">
    <property type="entry name" value="SbcC_Walker_B"/>
    <property type="match status" value="1"/>
</dbReference>
<dbReference type="PIRSF" id="PIRSF005246">
    <property type="entry name" value="MukB"/>
    <property type="match status" value="1"/>
</dbReference>
<dbReference type="SUPFAM" id="SSF52540">
    <property type="entry name" value="P-loop containing nucleoside triphosphate hydrolases"/>
    <property type="match status" value="2"/>
</dbReference>
<proteinExistence type="inferred from homology"/>
<organism>
    <name type="scientific">Escherichia coli (strain SMS-3-5 / SECEC)</name>
    <dbReference type="NCBI Taxonomy" id="439855"/>
    <lineage>
        <taxon>Bacteria</taxon>
        <taxon>Pseudomonadati</taxon>
        <taxon>Pseudomonadota</taxon>
        <taxon>Gammaproteobacteria</taxon>
        <taxon>Enterobacterales</taxon>
        <taxon>Enterobacteriaceae</taxon>
        <taxon>Escherichia</taxon>
    </lineage>
</organism>
<feature type="chain" id="PRO_1000187476" description="Chromosome partition protein MukB">
    <location>
        <begin position="1"/>
        <end position="1486"/>
    </location>
</feature>
<feature type="region of interest" description="Flexible hinge" evidence="1">
    <location>
        <begin position="666"/>
        <end position="783"/>
    </location>
</feature>
<feature type="coiled-coil region" evidence="1">
    <location>
        <begin position="326"/>
        <end position="418"/>
    </location>
</feature>
<feature type="coiled-coil region" evidence="1">
    <location>
        <begin position="444"/>
        <end position="480"/>
    </location>
</feature>
<feature type="coiled-coil region" evidence="1">
    <location>
        <begin position="509"/>
        <end position="603"/>
    </location>
</feature>
<feature type="coiled-coil region" evidence="1">
    <location>
        <begin position="835"/>
        <end position="923"/>
    </location>
</feature>
<feature type="coiled-coil region" evidence="1">
    <location>
        <begin position="977"/>
        <end position="1115"/>
    </location>
</feature>
<feature type="coiled-coil region" evidence="1">
    <location>
        <begin position="1209"/>
        <end position="1266"/>
    </location>
</feature>
<feature type="binding site" evidence="1">
    <location>
        <begin position="34"/>
        <end position="41"/>
    </location>
    <ligand>
        <name>ATP</name>
        <dbReference type="ChEBI" id="CHEBI:30616"/>
    </ligand>
</feature>